<dbReference type="EMBL" id="CP000886">
    <property type="protein sequence ID" value="ABX69586.1"/>
    <property type="molecule type" value="Genomic_DNA"/>
</dbReference>
<dbReference type="RefSeq" id="WP_001096206.1">
    <property type="nucleotide sequence ID" value="NC_010102.1"/>
</dbReference>
<dbReference type="SMR" id="A9MSY6"/>
<dbReference type="GeneID" id="93751944"/>
<dbReference type="KEGG" id="spq:SPAB_04269"/>
<dbReference type="PATRIC" id="fig|1016998.12.peg.4015"/>
<dbReference type="HOGENOM" id="CLU_061015_2_1_6"/>
<dbReference type="BioCyc" id="SENT1016998:SPAB_RS17375-MONOMER"/>
<dbReference type="Proteomes" id="UP000008556">
    <property type="component" value="Chromosome"/>
</dbReference>
<dbReference type="GO" id="GO:1990904">
    <property type="term" value="C:ribonucleoprotein complex"/>
    <property type="evidence" value="ECO:0007669"/>
    <property type="project" value="UniProtKB-KW"/>
</dbReference>
<dbReference type="GO" id="GO:0005840">
    <property type="term" value="C:ribosome"/>
    <property type="evidence" value="ECO:0007669"/>
    <property type="project" value="UniProtKB-KW"/>
</dbReference>
<dbReference type="GO" id="GO:0019843">
    <property type="term" value="F:rRNA binding"/>
    <property type="evidence" value="ECO:0007669"/>
    <property type="project" value="UniProtKB-UniRule"/>
</dbReference>
<dbReference type="GO" id="GO:0003735">
    <property type="term" value="F:structural constituent of ribosome"/>
    <property type="evidence" value="ECO:0007669"/>
    <property type="project" value="InterPro"/>
</dbReference>
<dbReference type="GO" id="GO:0000049">
    <property type="term" value="F:tRNA binding"/>
    <property type="evidence" value="ECO:0007669"/>
    <property type="project" value="UniProtKB-UniRule"/>
</dbReference>
<dbReference type="GO" id="GO:0006412">
    <property type="term" value="P:translation"/>
    <property type="evidence" value="ECO:0007669"/>
    <property type="project" value="UniProtKB-UniRule"/>
</dbReference>
<dbReference type="FunFam" id="3.30.1440.10:FF:000001">
    <property type="entry name" value="50S ribosomal protein L5"/>
    <property type="match status" value="1"/>
</dbReference>
<dbReference type="Gene3D" id="3.30.1440.10">
    <property type="match status" value="1"/>
</dbReference>
<dbReference type="HAMAP" id="MF_01333_B">
    <property type="entry name" value="Ribosomal_uL5_B"/>
    <property type="match status" value="1"/>
</dbReference>
<dbReference type="InterPro" id="IPR002132">
    <property type="entry name" value="Ribosomal_uL5"/>
</dbReference>
<dbReference type="InterPro" id="IPR020930">
    <property type="entry name" value="Ribosomal_uL5_bac-type"/>
</dbReference>
<dbReference type="InterPro" id="IPR031309">
    <property type="entry name" value="Ribosomal_uL5_C"/>
</dbReference>
<dbReference type="InterPro" id="IPR020929">
    <property type="entry name" value="Ribosomal_uL5_CS"/>
</dbReference>
<dbReference type="InterPro" id="IPR022803">
    <property type="entry name" value="Ribosomal_uL5_dom_sf"/>
</dbReference>
<dbReference type="InterPro" id="IPR031310">
    <property type="entry name" value="Ribosomal_uL5_N"/>
</dbReference>
<dbReference type="NCBIfam" id="NF000585">
    <property type="entry name" value="PRK00010.1"/>
    <property type="match status" value="1"/>
</dbReference>
<dbReference type="PANTHER" id="PTHR11994">
    <property type="entry name" value="60S RIBOSOMAL PROTEIN L11-RELATED"/>
    <property type="match status" value="1"/>
</dbReference>
<dbReference type="Pfam" id="PF00281">
    <property type="entry name" value="Ribosomal_L5"/>
    <property type="match status" value="1"/>
</dbReference>
<dbReference type="Pfam" id="PF00673">
    <property type="entry name" value="Ribosomal_L5_C"/>
    <property type="match status" value="1"/>
</dbReference>
<dbReference type="PIRSF" id="PIRSF002161">
    <property type="entry name" value="Ribosomal_L5"/>
    <property type="match status" value="1"/>
</dbReference>
<dbReference type="SUPFAM" id="SSF55282">
    <property type="entry name" value="RL5-like"/>
    <property type="match status" value="1"/>
</dbReference>
<dbReference type="PROSITE" id="PS00358">
    <property type="entry name" value="RIBOSOMAL_L5"/>
    <property type="match status" value="1"/>
</dbReference>
<name>RL5_SALPB</name>
<accession>A9MSY6</accession>
<organism>
    <name type="scientific">Salmonella paratyphi B (strain ATCC BAA-1250 / SPB7)</name>
    <dbReference type="NCBI Taxonomy" id="1016998"/>
    <lineage>
        <taxon>Bacteria</taxon>
        <taxon>Pseudomonadati</taxon>
        <taxon>Pseudomonadota</taxon>
        <taxon>Gammaproteobacteria</taxon>
        <taxon>Enterobacterales</taxon>
        <taxon>Enterobacteriaceae</taxon>
        <taxon>Salmonella</taxon>
    </lineage>
</organism>
<proteinExistence type="inferred from homology"/>
<comment type="function">
    <text evidence="1">This is one of the proteins that bind and probably mediate the attachment of the 5S RNA into the large ribosomal subunit, where it forms part of the central protuberance. In the 70S ribosome it contacts protein S13 of the 30S subunit (bridge B1b), connecting the 2 subunits; this bridge is implicated in subunit movement. Contacts the P site tRNA; the 5S rRNA and some of its associated proteins might help stabilize positioning of ribosome-bound tRNAs.</text>
</comment>
<comment type="subunit">
    <text evidence="1">Part of the 50S ribosomal subunit; part of the 5S rRNA/L5/L18/L25 subcomplex. Contacts the 5S rRNA and the P site tRNA. Forms a bridge to the 30S subunit in the 70S ribosome.</text>
</comment>
<comment type="similarity">
    <text evidence="1">Belongs to the universal ribosomal protein uL5 family.</text>
</comment>
<evidence type="ECO:0000255" key="1">
    <source>
        <dbReference type="HAMAP-Rule" id="MF_01333"/>
    </source>
</evidence>
<evidence type="ECO:0000305" key="2"/>
<keyword id="KW-0687">Ribonucleoprotein</keyword>
<keyword id="KW-0689">Ribosomal protein</keyword>
<keyword id="KW-0694">RNA-binding</keyword>
<keyword id="KW-0699">rRNA-binding</keyword>
<keyword id="KW-0820">tRNA-binding</keyword>
<gene>
    <name evidence="1" type="primary">rplE</name>
    <name type="ordered locus">SPAB_04269</name>
</gene>
<protein>
    <recommendedName>
        <fullName evidence="1">Large ribosomal subunit protein uL5</fullName>
    </recommendedName>
    <alternativeName>
        <fullName evidence="2">50S ribosomal protein L5</fullName>
    </alternativeName>
</protein>
<reference key="1">
    <citation type="submission" date="2007-11" db="EMBL/GenBank/DDBJ databases">
        <authorList>
            <consortium name="The Salmonella enterica serovar Paratyphi B Genome Sequencing Project"/>
            <person name="McClelland M."/>
            <person name="Sanderson E.K."/>
            <person name="Porwollik S."/>
            <person name="Spieth J."/>
            <person name="Clifton W.S."/>
            <person name="Fulton R."/>
            <person name="Cordes M."/>
            <person name="Wollam A."/>
            <person name="Shah N."/>
            <person name="Pepin K."/>
            <person name="Bhonagiri V."/>
            <person name="Nash W."/>
            <person name="Johnson M."/>
            <person name="Thiruvilangam P."/>
            <person name="Wilson R."/>
        </authorList>
    </citation>
    <scope>NUCLEOTIDE SEQUENCE [LARGE SCALE GENOMIC DNA]</scope>
    <source>
        <strain>ATCC BAA-1250 / SPB7</strain>
    </source>
</reference>
<feature type="chain" id="PRO_1000086605" description="Large ribosomal subunit protein uL5">
    <location>
        <begin position="1"/>
        <end position="179"/>
    </location>
</feature>
<sequence length="179" mass="20318">MAKLHDYYKDEVVNKLMTEFNYNSVMQVPRVEKITLNMGVGEAIADKKLLDNAAADLTAISGQKPLITKARKSVAGFKIRQGYPIGCKVTLRGERMWEFFERLITIAVPRIRDFRGLSAKSFDGRGNYSMGVREQIIFPEIDYDKVDRVRGLDITITTTAKSDEEGRALLAAFDFPFRK</sequence>